<dbReference type="EC" id="3.5.4.16" evidence="2"/>
<dbReference type="EMBL" id="CP000027">
    <property type="protein sequence ID" value="AAW39542.1"/>
    <property type="molecule type" value="Genomic_DNA"/>
</dbReference>
<dbReference type="RefSeq" id="WP_010936894.1">
    <property type="nucleotide sequence ID" value="NC_002936.3"/>
</dbReference>
<dbReference type="SMR" id="Q3Z782"/>
<dbReference type="FunCoup" id="Q3Z782">
    <property type="interactions" value="177"/>
</dbReference>
<dbReference type="STRING" id="243164.DET1204"/>
<dbReference type="GeneID" id="3229503"/>
<dbReference type="KEGG" id="det:DET1204"/>
<dbReference type="eggNOG" id="COG0302">
    <property type="taxonomic scope" value="Bacteria"/>
</dbReference>
<dbReference type="HOGENOM" id="CLU_049768_3_3_0"/>
<dbReference type="InParanoid" id="Q3Z782"/>
<dbReference type="UniPathway" id="UPA00848">
    <property type="reaction ID" value="UER00151"/>
</dbReference>
<dbReference type="Proteomes" id="UP000008289">
    <property type="component" value="Chromosome"/>
</dbReference>
<dbReference type="GO" id="GO:0005737">
    <property type="term" value="C:cytoplasm"/>
    <property type="evidence" value="ECO:0007669"/>
    <property type="project" value="TreeGrafter"/>
</dbReference>
<dbReference type="GO" id="GO:0005525">
    <property type="term" value="F:GTP binding"/>
    <property type="evidence" value="ECO:0007669"/>
    <property type="project" value="UniProtKB-KW"/>
</dbReference>
<dbReference type="GO" id="GO:0003934">
    <property type="term" value="F:GTP cyclohydrolase I activity"/>
    <property type="evidence" value="ECO:0007669"/>
    <property type="project" value="UniProtKB-UniRule"/>
</dbReference>
<dbReference type="GO" id="GO:0008270">
    <property type="term" value="F:zinc ion binding"/>
    <property type="evidence" value="ECO:0007669"/>
    <property type="project" value="UniProtKB-UniRule"/>
</dbReference>
<dbReference type="GO" id="GO:0006730">
    <property type="term" value="P:one-carbon metabolic process"/>
    <property type="evidence" value="ECO:0007669"/>
    <property type="project" value="UniProtKB-UniRule"/>
</dbReference>
<dbReference type="GO" id="GO:0006729">
    <property type="term" value="P:tetrahydrobiopterin biosynthetic process"/>
    <property type="evidence" value="ECO:0007669"/>
    <property type="project" value="TreeGrafter"/>
</dbReference>
<dbReference type="GO" id="GO:0046654">
    <property type="term" value="P:tetrahydrofolate biosynthetic process"/>
    <property type="evidence" value="ECO:0007669"/>
    <property type="project" value="UniProtKB-UniRule"/>
</dbReference>
<dbReference type="FunFam" id="1.10.286.10:FF:000001">
    <property type="entry name" value="GTP cyclohydrolase 1"/>
    <property type="match status" value="1"/>
</dbReference>
<dbReference type="FunFam" id="3.30.1130.10:FF:000001">
    <property type="entry name" value="GTP cyclohydrolase 1"/>
    <property type="match status" value="1"/>
</dbReference>
<dbReference type="Gene3D" id="1.10.286.10">
    <property type="match status" value="1"/>
</dbReference>
<dbReference type="Gene3D" id="3.30.1130.10">
    <property type="match status" value="1"/>
</dbReference>
<dbReference type="HAMAP" id="MF_00223">
    <property type="entry name" value="FolE"/>
    <property type="match status" value="1"/>
</dbReference>
<dbReference type="InterPro" id="IPR043133">
    <property type="entry name" value="GTP-CH-I_C/QueF"/>
</dbReference>
<dbReference type="InterPro" id="IPR043134">
    <property type="entry name" value="GTP-CH-I_N"/>
</dbReference>
<dbReference type="InterPro" id="IPR001474">
    <property type="entry name" value="GTP_CycHdrlase_I"/>
</dbReference>
<dbReference type="InterPro" id="IPR018234">
    <property type="entry name" value="GTP_CycHdrlase_I_CS"/>
</dbReference>
<dbReference type="InterPro" id="IPR020602">
    <property type="entry name" value="GTP_CycHdrlase_I_dom"/>
</dbReference>
<dbReference type="NCBIfam" id="TIGR00063">
    <property type="entry name" value="folE"/>
    <property type="match status" value="1"/>
</dbReference>
<dbReference type="NCBIfam" id="NF006825">
    <property type="entry name" value="PRK09347.1-2"/>
    <property type="match status" value="1"/>
</dbReference>
<dbReference type="NCBIfam" id="NF006826">
    <property type="entry name" value="PRK09347.1-3"/>
    <property type="match status" value="1"/>
</dbReference>
<dbReference type="PANTHER" id="PTHR11109:SF7">
    <property type="entry name" value="GTP CYCLOHYDROLASE 1"/>
    <property type="match status" value="1"/>
</dbReference>
<dbReference type="PANTHER" id="PTHR11109">
    <property type="entry name" value="GTP CYCLOHYDROLASE I"/>
    <property type="match status" value="1"/>
</dbReference>
<dbReference type="Pfam" id="PF01227">
    <property type="entry name" value="GTP_cyclohydroI"/>
    <property type="match status" value="1"/>
</dbReference>
<dbReference type="SUPFAM" id="SSF55620">
    <property type="entry name" value="Tetrahydrobiopterin biosynthesis enzymes-like"/>
    <property type="match status" value="1"/>
</dbReference>
<dbReference type="PROSITE" id="PS00859">
    <property type="entry name" value="GTP_CYCLOHYDROL_1_1"/>
    <property type="match status" value="1"/>
</dbReference>
<evidence type="ECO:0000250" key="1"/>
<evidence type="ECO:0000255" key="2">
    <source>
        <dbReference type="HAMAP-Rule" id="MF_00223"/>
    </source>
</evidence>
<comment type="catalytic activity">
    <reaction evidence="2">
        <text>GTP + H2O = 7,8-dihydroneopterin 3'-triphosphate + formate + H(+)</text>
        <dbReference type="Rhea" id="RHEA:17473"/>
        <dbReference type="ChEBI" id="CHEBI:15377"/>
        <dbReference type="ChEBI" id="CHEBI:15378"/>
        <dbReference type="ChEBI" id="CHEBI:15740"/>
        <dbReference type="ChEBI" id="CHEBI:37565"/>
        <dbReference type="ChEBI" id="CHEBI:58462"/>
        <dbReference type="EC" id="3.5.4.16"/>
    </reaction>
</comment>
<comment type="pathway">
    <text evidence="2">Cofactor biosynthesis; 7,8-dihydroneopterin triphosphate biosynthesis; 7,8-dihydroneopterin triphosphate from GTP: step 1/1.</text>
</comment>
<comment type="subunit">
    <text evidence="1">Toroid-shaped homodecamer, composed of two pentamers of five dimers.</text>
</comment>
<comment type="similarity">
    <text evidence="2">Belongs to the GTP cyclohydrolase I family.</text>
</comment>
<name>GCH1_DEHM1</name>
<sequence length="189" mass="21170">MFDEQAIKQSVQNMLLAIGEDPEREGLKETPRRVAQMYAELFSGMNQDPAEVLRVGYELGHREMVIIKDIPFYSMCEHHLLPFSGVVHIGYIPNIDGRVVGISKLARVVEIYAKRPQIQERMATQIADAIIDGLKCDGVAVVIEAEHMCMVMRGIKKPGSRVITSALRGSFHKSPAARAEFLSLIQQKH</sequence>
<gene>
    <name evidence="2" type="primary">folE</name>
    <name type="ordered locus">DET1204</name>
</gene>
<protein>
    <recommendedName>
        <fullName evidence="2">GTP cyclohydrolase 1</fullName>
        <ecNumber evidence="2">3.5.4.16</ecNumber>
    </recommendedName>
    <alternativeName>
        <fullName evidence="2">GTP cyclohydrolase I</fullName>
        <shortName evidence="2">GTP-CH-I</shortName>
    </alternativeName>
</protein>
<organism>
    <name type="scientific">Dehalococcoides mccartyi (strain ATCC BAA-2266 / KCTC 15142 / 195)</name>
    <name type="common">Dehalococcoides ethenogenes (strain 195)</name>
    <dbReference type="NCBI Taxonomy" id="243164"/>
    <lineage>
        <taxon>Bacteria</taxon>
        <taxon>Bacillati</taxon>
        <taxon>Chloroflexota</taxon>
        <taxon>Dehalococcoidia</taxon>
        <taxon>Dehalococcoidales</taxon>
        <taxon>Dehalococcoidaceae</taxon>
        <taxon>Dehalococcoides</taxon>
    </lineage>
</organism>
<keyword id="KW-0342">GTP-binding</keyword>
<keyword id="KW-0378">Hydrolase</keyword>
<keyword id="KW-0479">Metal-binding</keyword>
<keyword id="KW-0547">Nucleotide-binding</keyword>
<keyword id="KW-0554">One-carbon metabolism</keyword>
<keyword id="KW-0862">Zinc</keyword>
<reference key="1">
    <citation type="journal article" date="2005" name="Science">
        <title>Genome sequence of the PCE-dechlorinating bacterium Dehalococcoides ethenogenes.</title>
        <authorList>
            <person name="Seshadri R."/>
            <person name="Adrian L."/>
            <person name="Fouts D.E."/>
            <person name="Eisen J.A."/>
            <person name="Phillippy A.M."/>
            <person name="Methe B.A."/>
            <person name="Ward N.L."/>
            <person name="Nelson W.C."/>
            <person name="DeBoy R.T."/>
            <person name="Khouri H.M."/>
            <person name="Kolonay J.F."/>
            <person name="Dodson R.J."/>
            <person name="Daugherty S.C."/>
            <person name="Brinkac L.M."/>
            <person name="Sullivan S.A."/>
            <person name="Madupu R."/>
            <person name="Nelson K.E."/>
            <person name="Kang K.H."/>
            <person name="Impraim M."/>
            <person name="Tran K."/>
            <person name="Robinson J.M."/>
            <person name="Forberger H.A."/>
            <person name="Fraser C.M."/>
            <person name="Zinder S.H."/>
            <person name="Heidelberg J.F."/>
        </authorList>
    </citation>
    <scope>NUCLEOTIDE SEQUENCE [LARGE SCALE GENOMIC DNA]</scope>
    <source>
        <strain>ATCC BAA-2266 / KCTC 15142 / 195</strain>
    </source>
</reference>
<proteinExistence type="inferred from homology"/>
<feature type="chain" id="PRO_1000043687" description="GTP cyclohydrolase 1">
    <location>
        <begin position="1"/>
        <end position="189"/>
    </location>
</feature>
<feature type="binding site" evidence="2">
    <location>
        <position position="76"/>
    </location>
    <ligand>
        <name>Zn(2+)</name>
        <dbReference type="ChEBI" id="CHEBI:29105"/>
    </ligand>
</feature>
<feature type="binding site" evidence="2">
    <location>
        <position position="79"/>
    </location>
    <ligand>
        <name>Zn(2+)</name>
        <dbReference type="ChEBI" id="CHEBI:29105"/>
    </ligand>
</feature>
<feature type="binding site" evidence="2">
    <location>
        <position position="149"/>
    </location>
    <ligand>
        <name>Zn(2+)</name>
        <dbReference type="ChEBI" id="CHEBI:29105"/>
    </ligand>
</feature>
<accession>Q3Z782</accession>